<organism>
    <name type="scientific">Lawsonia intracellularis (strain PHE/MN1-00)</name>
    <dbReference type="NCBI Taxonomy" id="363253"/>
    <lineage>
        <taxon>Bacteria</taxon>
        <taxon>Pseudomonadati</taxon>
        <taxon>Thermodesulfobacteriota</taxon>
        <taxon>Desulfovibrionia</taxon>
        <taxon>Desulfovibrionales</taxon>
        <taxon>Desulfovibrionaceae</taxon>
        <taxon>Lawsonia</taxon>
    </lineage>
</organism>
<name>RS12_LAWIP</name>
<accession>Q1MPT1</accession>
<comment type="function">
    <text evidence="2">With S4 and S5 plays an important role in translational accuracy.</text>
</comment>
<comment type="function">
    <text evidence="2">Interacts with and stabilizes bases of the 16S rRNA that are involved in tRNA selection in the A site and with the mRNA backbone. Located at the interface of the 30S and 50S subunits, it traverses the body of the 30S subunit contacting proteins on the other side and probably holding the rRNA structure together. The combined cluster of proteins S8, S12 and S17 appears to hold together the shoulder and platform of the 30S subunit.</text>
</comment>
<comment type="subunit">
    <text evidence="2">Part of the 30S ribosomal subunit. Contacts proteins S8 and S17. May interact with IF1 in the 30S initiation complex.</text>
</comment>
<comment type="similarity">
    <text evidence="2">Belongs to the universal ribosomal protein uS12 family.</text>
</comment>
<proteinExistence type="inferred from homology"/>
<sequence>MPTINQLIRHERKKVVKRKKTPALQGCPQRRGVCTRVYTTTPKKPNSALRKVARVRLTNGLEVTAYIPGEGHNLQEHSVVLIRGGRVKDLPGVRYHIIRGTLDTSGVQDRRQRRSKYGAKRPK</sequence>
<dbReference type="EMBL" id="AM180252">
    <property type="protein sequence ID" value="CAJ54996.1"/>
    <property type="molecule type" value="Genomic_DNA"/>
</dbReference>
<dbReference type="RefSeq" id="WP_011527025.1">
    <property type="nucleotide sequence ID" value="NC_008011.1"/>
</dbReference>
<dbReference type="SMR" id="Q1MPT1"/>
<dbReference type="STRING" id="363253.LI0942"/>
<dbReference type="KEGG" id="lip:LI0942"/>
<dbReference type="eggNOG" id="COG0048">
    <property type="taxonomic scope" value="Bacteria"/>
</dbReference>
<dbReference type="HOGENOM" id="CLU_104295_1_2_7"/>
<dbReference type="OrthoDB" id="9802366at2"/>
<dbReference type="Proteomes" id="UP000002430">
    <property type="component" value="Chromosome"/>
</dbReference>
<dbReference type="GO" id="GO:0015935">
    <property type="term" value="C:small ribosomal subunit"/>
    <property type="evidence" value="ECO:0007669"/>
    <property type="project" value="InterPro"/>
</dbReference>
<dbReference type="GO" id="GO:0019843">
    <property type="term" value="F:rRNA binding"/>
    <property type="evidence" value="ECO:0007669"/>
    <property type="project" value="UniProtKB-UniRule"/>
</dbReference>
<dbReference type="GO" id="GO:0003735">
    <property type="term" value="F:structural constituent of ribosome"/>
    <property type="evidence" value="ECO:0007669"/>
    <property type="project" value="InterPro"/>
</dbReference>
<dbReference type="GO" id="GO:0000049">
    <property type="term" value="F:tRNA binding"/>
    <property type="evidence" value="ECO:0007669"/>
    <property type="project" value="UniProtKB-UniRule"/>
</dbReference>
<dbReference type="GO" id="GO:0006412">
    <property type="term" value="P:translation"/>
    <property type="evidence" value="ECO:0007669"/>
    <property type="project" value="UniProtKB-UniRule"/>
</dbReference>
<dbReference type="CDD" id="cd03368">
    <property type="entry name" value="Ribosomal_S12"/>
    <property type="match status" value="1"/>
</dbReference>
<dbReference type="FunFam" id="2.40.50.140:FF:000001">
    <property type="entry name" value="30S ribosomal protein S12"/>
    <property type="match status" value="1"/>
</dbReference>
<dbReference type="Gene3D" id="2.40.50.140">
    <property type="entry name" value="Nucleic acid-binding proteins"/>
    <property type="match status" value="1"/>
</dbReference>
<dbReference type="HAMAP" id="MF_00403_B">
    <property type="entry name" value="Ribosomal_uS12_B"/>
    <property type="match status" value="1"/>
</dbReference>
<dbReference type="InterPro" id="IPR012340">
    <property type="entry name" value="NA-bd_OB-fold"/>
</dbReference>
<dbReference type="InterPro" id="IPR006032">
    <property type="entry name" value="Ribosomal_uS12"/>
</dbReference>
<dbReference type="InterPro" id="IPR005679">
    <property type="entry name" value="Ribosomal_uS12_bac"/>
</dbReference>
<dbReference type="NCBIfam" id="TIGR00981">
    <property type="entry name" value="rpsL_bact"/>
    <property type="match status" value="1"/>
</dbReference>
<dbReference type="PANTHER" id="PTHR11652">
    <property type="entry name" value="30S RIBOSOMAL PROTEIN S12 FAMILY MEMBER"/>
    <property type="match status" value="1"/>
</dbReference>
<dbReference type="Pfam" id="PF00164">
    <property type="entry name" value="Ribosom_S12_S23"/>
    <property type="match status" value="1"/>
</dbReference>
<dbReference type="PIRSF" id="PIRSF002133">
    <property type="entry name" value="Ribosomal_S12/S23"/>
    <property type="match status" value="1"/>
</dbReference>
<dbReference type="PRINTS" id="PR01034">
    <property type="entry name" value="RIBOSOMALS12"/>
</dbReference>
<dbReference type="SUPFAM" id="SSF50249">
    <property type="entry name" value="Nucleic acid-binding proteins"/>
    <property type="match status" value="1"/>
</dbReference>
<dbReference type="PROSITE" id="PS00055">
    <property type="entry name" value="RIBOSOMAL_S12"/>
    <property type="match status" value="1"/>
</dbReference>
<keyword id="KW-0488">Methylation</keyword>
<keyword id="KW-1185">Reference proteome</keyword>
<keyword id="KW-0687">Ribonucleoprotein</keyword>
<keyword id="KW-0689">Ribosomal protein</keyword>
<keyword id="KW-0694">RNA-binding</keyword>
<keyword id="KW-0699">rRNA-binding</keyword>
<keyword id="KW-0820">tRNA-binding</keyword>
<gene>
    <name evidence="2" type="primary">rpsL</name>
    <name type="ordered locus">LI0942</name>
</gene>
<feature type="chain" id="PRO_0000263567" description="Small ribosomal subunit protein uS12">
    <location>
        <begin position="1"/>
        <end position="123"/>
    </location>
</feature>
<feature type="region of interest" description="Disordered" evidence="3">
    <location>
        <begin position="102"/>
        <end position="123"/>
    </location>
</feature>
<feature type="compositionally biased region" description="Basic residues" evidence="3">
    <location>
        <begin position="111"/>
        <end position="123"/>
    </location>
</feature>
<feature type="modified residue" description="3-methylthioaspartic acid" evidence="1">
    <location>
        <position position="89"/>
    </location>
</feature>
<protein>
    <recommendedName>
        <fullName evidence="2">Small ribosomal subunit protein uS12</fullName>
    </recommendedName>
    <alternativeName>
        <fullName evidence="4">30S ribosomal protein S12</fullName>
    </alternativeName>
</protein>
<evidence type="ECO:0000250" key="1"/>
<evidence type="ECO:0000255" key="2">
    <source>
        <dbReference type="HAMAP-Rule" id="MF_00403"/>
    </source>
</evidence>
<evidence type="ECO:0000256" key="3">
    <source>
        <dbReference type="SAM" id="MobiDB-lite"/>
    </source>
</evidence>
<evidence type="ECO:0000305" key="4"/>
<reference key="1">
    <citation type="submission" date="2005-11" db="EMBL/GenBank/DDBJ databases">
        <title>The complete genome sequence of Lawsonia intracellularis: the causative agent of proliferative enteropathy.</title>
        <authorList>
            <person name="Kaur K."/>
            <person name="Zhang Q."/>
            <person name="Beckler D."/>
            <person name="Munir S."/>
            <person name="Li L."/>
            <person name="Kinsley K."/>
            <person name="Herron L."/>
            <person name="Peterson A."/>
            <person name="May B."/>
            <person name="Singh S."/>
            <person name="Gebhart C."/>
            <person name="Kapur V."/>
        </authorList>
    </citation>
    <scope>NUCLEOTIDE SEQUENCE [LARGE SCALE GENOMIC DNA]</scope>
    <source>
        <strain>PHE/MN1-00</strain>
    </source>
</reference>